<organism>
    <name type="scientific">Escherichia coli O157:H7 (strain EC4115 / EHEC)</name>
    <dbReference type="NCBI Taxonomy" id="444450"/>
    <lineage>
        <taxon>Bacteria</taxon>
        <taxon>Pseudomonadati</taxon>
        <taxon>Pseudomonadota</taxon>
        <taxon>Gammaproteobacteria</taxon>
        <taxon>Enterobacterales</taxon>
        <taxon>Enterobacteriaceae</taxon>
        <taxon>Escherichia</taxon>
    </lineage>
</organism>
<proteinExistence type="inferred from homology"/>
<dbReference type="EMBL" id="CP001164">
    <property type="protein sequence ID" value="ACI37916.1"/>
    <property type="molecule type" value="Genomic_DNA"/>
</dbReference>
<dbReference type="RefSeq" id="WP_000186369.1">
    <property type="nucleotide sequence ID" value="NC_011353.1"/>
</dbReference>
<dbReference type="SMR" id="B5YZU5"/>
<dbReference type="KEGG" id="ecf:ECH74115_3623"/>
<dbReference type="HOGENOM" id="CLU_020088_2_0_6"/>
<dbReference type="GO" id="GO:0005886">
    <property type="term" value="C:plasma membrane"/>
    <property type="evidence" value="ECO:0007669"/>
    <property type="project" value="UniProtKB-SubCell"/>
</dbReference>
<dbReference type="GO" id="GO:0015086">
    <property type="term" value="F:cadmium ion transmembrane transporter activity"/>
    <property type="evidence" value="ECO:0007669"/>
    <property type="project" value="TreeGrafter"/>
</dbReference>
<dbReference type="GO" id="GO:0005384">
    <property type="term" value="F:manganese ion transmembrane transporter activity"/>
    <property type="evidence" value="ECO:0007669"/>
    <property type="project" value="TreeGrafter"/>
</dbReference>
<dbReference type="GO" id="GO:0046872">
    <property type="term" value="F:metal ion binding"/>
    <property type="evidence" value="ECO:0007669"/>
    <property type="project" value="UniProtKB-UniRule"/>
</dbReference>
<dbReference type="GO" id="GO:0015293">
    <property type="term" value="F:symporter activity"/>
    <property type="evidence" value="ECO:0007669"/>
    <property type="project" value="UniProtKB-UniRule"/>
</dbReference>
<dbReference type="GO" id="GO:0034755">
    <property type="term" value="P:iron ion transmembrane transport"/>
    <property type="evidence" value="ECO:0007669"/>
    <property type="project" value="TreeGrafter"/>
</dbReference>
<dbReference type="HAMAP" id="MF_00221">
    <property type="entry name" value="NRAMP"/>
    <property type="match status" value="1"/>
</dbReference>
<dbReference type="InterPro" id="IPR001046">
    <property type="entry name" value="NRAMP_fam"/>
</dbReference>
<dbReference type="NCBIfam" id="TIGR01197">
    <property type="entry name" value="nramp"/>
    <property type="match status" value="1"/>
</dbReference>
<dbReference type="NCBIfam" id="NF037982">
    <property type="entry name" value="Nramp_1"/>
    <property type="match status" value="1"/>
</dbReference>
<dbReference type="NCBIfam" id="NF001923">
    <property type="entry name" value="PRK00701.1"/>
    <property type="match status" value="1"/>
</dbReference>
<dbReference type="PANTHER" id="PTHR11706:SF33">
    <property type="entry name" value="NATURAL RESISTANCE-ASSOCIATED MACROPHAGE PROTEIN 2"/>
    <property type="match status" value="1"/>
</dbReference>
<dbReference type="PANTHER" id="PTHR11706">
    <property type="entry name" value="SOLUTE CARRIER PROTEIN FAMILY 11 MEMBER"/>
    <property type="match status" value="1"/>
</dbReference>
<dbReference type="Pfam" id="PF01566">
    <property type="entry name" value="Nramp"/>
    <property type="match status" value="1"/>
</dbReference>
<dbReference type="PRINTS" id="PR00447">
    <property type="entry name" value="NATRESASSCMP"/>
</dbReference>
<keyword id="KW-0997">Cell inner membrane</keyword>
<keyword id="KW-1003">Cell membrane</keyword>
<keyword id="KW-0406">Ion transport</keyword>
<keyword id="KW-0472">Membrane</keyword>
<keyword id="KW-0769">Symport</keyword>
<keyword id="KW-0812">Transmembrane</keyword>
<keyword id="KW-1133">Transmembrane helix</keyword>
<keyword id="KW-0813">Transport</keyword>
<sequence length="412" mass="44194">MTNYRVESSSGRAARKMRLALMGPAFIAAIGYIDPGNFATNIQAGASFGYQLLWVVVWANLMAMLIQILSAKLGIATGKNLAEQIRDHYPRPVVWFYWVQAEIIAMATDLAEFIGAAIGFKLILGVSLLQGAVLTGIATFLILMLQRRGQKPLEKVIGGLLLFVAAAYIVELIFSQPNLAQLGKGMVIPSLPTSEAVFLAAGVLGATIMPHVIYLHSSLTQHLHGGSRQQRYSATKWDVAIAMTIAGFVNLAMMATAAAAFHFSGHTGVADLDEAYLTLQPLLSHAAATVFGLSLVAAGLSSTVVGTLAGQVVMQGFIRFHIPLWVRRTVTMLPSFIVILMGLDPTRILVMSQVLLSFGIALALVPLLIFTSDSKLMGDLVNSKRVKQTGWVIVVLVVALNIWLLVGTALGL</sequence>
<protein>
    <recommendedName>
        <fullName evidence="1">Divalent metal cation transporter MntH</fullName>
    </recommendedName>
</protein>
<accession>B5YZU5</accession>
<name>MNTH_ECO5E</name>
<gene>
    <name evidence="1" type="primary">mntH</name>
    <name type="ordered locus">ECH74115_3623</name>
</gene>
<evidence type="ECO:0000255" key="1">
    <source>
        <dbReference type="HAMAP-Rule" id="MF_00221"/>
    </source>
</evidence>
<comment type="function">
    <text evidence="1">H(+)-stimulated, divalent metal cation uptake system.</text>
</comment>
<comment type="subcellular location">
    <subcellularLocation>
        <location evidence="1">Cell inner membrane</location>
        <topology evidence="1">Multi-pass membrane protein</topology>
    </subcellularLocation>
</comment>
<comment type="similarity">
    <text evidence="1">Belongs to the NRAMP family.</text>
</comment>
<feature type="chain" id="PRO_1000100082" description="Divalent metal cation transporter MntH">
    <location>
        <begin position="1"/>
        <end position="412"/>
    </location>
</feature>
<feature type="topological domain" description="Cytoplasmic" evidence="1">
    <location>
        <begin position="1"/>
        <end position="19"/>
    </location>
</feature>
<feature type="transmembrane region" description="Helical" evidence="1">
    <location>
        <begin position="20"/>
        <end position="39"/>
    </location>
</feature>
<feature type="topological domain" description="Periplasmic" evidence="1">
    <location>
        <begin position="40"/>
        <end position="51"/>
    </location>
</feature>
<feature type="transmembrane region" description="Helical" evidence="1">
    <location>
        <begin position="52"/>
        <end position="71"/>
    </location>
</feature>
<feature type="topological domain" description="Cytoplasmic" evidence="1">
    <location>
        <begin position="72"/>
        <end position="95"/>
    </location>
</feature>
<feature type="transmembrane region" description="Helical" evidence="1">
    <location>
        <begin position="96"/>
        <end position="118"/>
    </location>
</feature>
<feature type="topological domain" description="Periplasmic" evidence="1">
    <location>
        <begin position="119"/>
        <end position="125"/>
    </location>
</feature>
<feature type="transmembrane region" description="Helical" evidence="1">
    <location>
        <begin position="126"/>
        <end position="145"/>
    </location>
</feature>
<feature type="topological domain" description="Cytoplasmic" evidence="1">
    <location>
        <begin position="146"/>
        <end position="155"/>
    </location>
</feature>
<feature type="transmembrane region" description="Helical" evidence="1">
    <location>
        <begin position="156"/>
        <end position="175"/>
    </location>
</feature>
<feature type="topological domain" description="Periplasmic" evidence="1">
    <location>
        <begin position="176"/>
        <end position="196"/>
    </location>
</feature>
<feature type="transmembrane region" description="Helical" evidence="1">
    <location>
        <begin position="197"/>
        <end position="220"/>
    </location>
</feature>
<feature type="topological domain" description="Cytoplasmic" evidence="1">
    <location>
        <begin position="221"/>
        <end position="238"/>
    </location>
</feature>
<feature type="transmembrane region" description="Helical" evidence="1">
    <location>
        <begin position="239"/>
        <end position="258"/>
    </location>
</feature>
<feature type="topological domain" description="Periplasmic" evidence="1">
    <location>
        <begin position="259"/>
        <end position="276"/>
    </location>
</feature>
<feature type="transmembrane region" description="Helical" evidence="1">
    <location>
        <begin position="277"/>
        <end position="297"/>
    </location>
</feature>
<feature type="topological domain" description="Cytoplasmic" evidence="1">
    <location>
        <begin position="298"/>
        <end position="327"/>
    </location>
</feature>
<feature type="transmembrane region" description="Helical" evidence="1">
    <location>
        <begin position="328"/>
        <end position="344"/>
    </location>
</feature>
<feature type="topological domain" description="Periplasmic" evidence="1">
    <location>
        <begin position="345"/>
        <end position="350"/>
    </location>
</feature>
<feature type="transmembrane region" description="Helical" evidence="1">
    <location>
        <begin position="351"/>
        <end position="370"/>
    </location>
</feature>
<feature type="topological domain" description="Cytoplasmic" evidence="1">
    <location>
        <begin position="371"/>
        <end position="387"/>
    </location>
</feature>
<feature type="transmembrane region" description="Helical" evidence="1">
    <location>
        <begin position="388"/>
        <end position="406"/>
    </location>
</feature>
<feature type="topological domain" description="Periplasmic" evidence="1">
    <location>
        <begin position="407"/>
        <end position="412"/>
    </location>
</feature>
<reference key="1">
    <citation type="journal article" date="2011" name="Proc. Natl. Acad. Sci. U.S.A.">
        <title>Genomic anatomy of Escherichia coli O157:H7 outbreaks.</title>
        <authorList>
            <person name="Eppinger M."/>
            <person name="Mammel M.K."/>
            <person name="Leclerc J.E."/>
            <person name="Ravel J."/>
            <person name="Cebula T.A."/>
        </authorList>
    </citation>
    <scope>NUCLEOTIDE SEQUENCE [LARGE SCALE GENOMIC DNA]</scope>
    <source>
        <strain>EC4115 / EHEC</strain>
    </source>
</reference>